<proteinExistence type="evidence at protein level"/>
<accession>A5VRW9</accession>
<feature type="chain" id="PRO_0000363200" description="Cell cycle response regulator CtrA">
    <location>
        <begin position="1"/>
        <end position="232"/>
    </location>
</feature>
<feature type="domain" description="Response regulatory" evidence="2">
    <location>
        <begin position="2"/>
        <end position="116"/>
    </location>
</feature>
<feature type="DNA-binding region" description="OmpR/PhoB-type" evidence="3">
    <location>
        <begin position="124"/>
        <end position="223"/>
    </location>
</feature>
<feature type="modified residue" description="4-aspartylphosphate" evidence="2">
    <location>
        <position position="51"/>
    </location>
</feature>
<evidence type="ECO:0000250" key="1"/>
<evidence type="ECO:0000255" key="2">
    <source>
        <dbReference type="PROSITE-ProRule" id="PRU00169"/>
    </source>
</evidence>
<evidence type="ECO:0000255" key="3">
    <source>
        <dbReference type="PROSITE-ProRule" id="PRU01091"/>
    </source>
</evidence>
<sequence>MRVLLIEDDSAIAQSIELMLKSESFNVYTTDLGEEGIDLGKLYDYDIILLDLNLPDMSGYEVLRTLRLSKVKTPILILSGMAGIEDKVRGLGFGADDYMTKPFHKDELIARIHAIVRRSKGHAQSVITTGDLVVNLDAKTVEVAGQRVHLTGKEYQMLELLSLRKGTTLTKEMFLNHLYGGMDEPELKIIDVFICKLRKKLDAVSGNQSYIETVWGRGYVLREPDAEMRESA</sequence>
<keyword id="KW-0963">Cytoplasm</keyword>
<keyword id="KW-0238">DNA-binding</keyword>
<keyword id="KW-0597">Phosphoprotein</keyword>
<keyword id="KW-0804">Transcription</keyword>
<keyword id="KW-0805">Transcription regulation</keyword>
<keyword id="KW-0902">Two-component regulatory system</keyword>
<name>CTRA_BRUO2</name>
<protein>
    <recommendedName>
        <fullName>Cell cycle response regulator CtrA</fullName>
    </recommendedName>
</protein>
<comment type="function">
    <text evidence="1">Essential protein that plays a role in the control of cell division, possibly through the transcriptional regulation of ccrM, rpoD, pleC, minC and ftsZ genes.</text>
</comment>
<comment type="subcellular location">
    <subcellularLocation>
        <location evidence="1">Cytoplasm</location>
    </subcellularLocation>
</comment>
<organism>
    <name type="scientific">Brucella ovis (strain ATCC 25840 / 63/290 / NCTC 10512)</name>
    <dbReference type="NCBI Taxonomy" id="444178"/>
    <lineage>
        <taxon>Bacteria</taxon>
        <taxon>Pseudomonadati</taxon>
        <taxon>Pseudomonadota</taxon>
        <taxon>Alphaproteobacteria</taxon>
        <taxon>Hyphomicrobiales</taxon>
        <taxon>Brucellaceae</taxon>
        <taxon>Brucella/Ochrobactrum group</taxon>
        <taxon>Brucella</taxon>
    </lineage>
</organism>
<gene>
    <name type="primary">ctrA</name>
    <name type="ordered locus">BOV_1542</name>
</gene>
<reference key="1">
    <citation type="journal article" date="2009" name="PLoS ONE">
        <title>Genome degradation in Brucella ovis corresponds with narrowing of its host range and tissue tropism.</title>
        <authorList>
            <person name="Tsolis R.M."/>
            <person name="Seshadri R."/>
            <person name="Santos R.L."/>
            <person name="Sangari F.J."/>
            <person name="Lobo J.M."/>
            <person name="de Jong M.F."/>
            <person name="Ren Q."/>
            <person name="Myers G."/>
            <person name="Brinkac L.M."/>
            <person name="Nelson W.C."/>
            <person name="Deboy R.T."/>
            <person name="Angiuoli S."/>
            <person name="Khouri H."/>
            <person name="Dimitrov G."/>
            <person name="Robinson J.R."/>
            <person name="Mulligan S."/>
            <person name="Walker R.L."/>
            <person name="Elzer P.E."/>
            <person name="Hassan K.A."/>
            <person name="Paulsen I.T."/>
        </authorList>
    </citation>
    <scope>NUCLEOTIDE SEQUENCE [LARGE SCALE GENOMIC DNA]</scope>
    <source>
        <strain>ATCC 25840 / 63/290 / NCTC 10512</strain>
    </source>
</reference>
<reference key="2">
    <citation type="journal article" date="2002" name="Mol. Microbiol.">
        <title>Plasticity of a transcriptional regulation network among alpha-proteobacteria is supported by the identification of CtrA targets in Brucella abortus.</title>
        <authorList>
            <person name="Bellefontaine A.F."/>
            <person name="Pierreux C.E."/>
            <person name="Mertens P."/>
            <person name="Vandenhaute J."/>
            <person name="Letesson J.J."/>
            <person name="De Bolle X."/>
        </authorList>
    </citation>
    <scope>PROTEIN EXPRESSION</scope>
</reference>
<dbReference type="EMBL" id="CP000708">
    <property type="protein sequence ID" value="ABQ60383.1"/>
    <property type="molecule type" value="Genomic_DNA"/>
</dbReference>
<dbReference type="RefSeq" id="WP_002964699.1">
    <property type="nucleotide sequence ID" value="NC_009505.1"/>
</dbReference>
<dbReference type="SMR" id="A5VRW9"/>
<dbReference type="GeneID" id="97533230"/>
<dbReference type="KEGG" id="bov:BOV_1542"/>
<dbReference type="HOGENOM" id="CLU_000445_30_1_5"/>
<dbReference type="PhylomeDB" id="A5VRW9"/>
<dbReference type="Proteomes" id="UP000006383">
    <property type="component" value="Chromosome I"/>
</dbReference>
<dbReference type="GO" id="GO:0005829">
    <property type="term" value="C:cytosol"/>
    <property type="evidence" value="ECO:0007669"/>
    <property type="project" value="TreeGrafter"/>
</dbReference>
<dbReference type="GO" id="GO:0032993">
    <property type="term" value="C:protein-DNA complex"/>
    <property type="evidence" value="ECO:0007669"/>
    <property type="project" value="TreeGrafter"/>
</dbReference>
<dbReference type="GO" id="GO:0000156">
    <property type="term" value="F:phosphorelay response regulator activity"/>
    <property type="evidence" value="ECO:0007669"/>
    <property type="project" value="TreeGrafter"/>
</dbReference>
<dbReference type="GO" id="GO:0000976">
    <property type="term" value="F:transcription cis-regulatory region binding"/>
    <property type="evidence" value="ECO:0007669"/>
    <property type="project" value="TreeGrafter"/>
</dbReference>
<dbReference type="GO" id="GO:0006355">
    <property type="term" value="P:regulation of DNA-templated transcription"/>
    <property type="evidence" value="ECO:0007669"/>
    <property type="project" value="InterPro"/>
</dbReference>
<dbReference type="CDD" id="cd17616">
    <property type="entry name" value="REC_OmpR_CtrA"/>
    <property type="match status" value="1"/>
</dbReference>
<dbReference type="CDD" id="cd00383">
    <property type="entry name" value="trans_reg_C"/>
    <property type="match status" value="1"/>
</dbReference>
<dbReference type="FunFam" id="1.10.10.10:FF:000052">
    <property type="entry name" value="Cell cycle response regulator"/>
    <property type="match status" value="1"/>
</dbReference>
<dbReference type="FunFam" id="3.40.50.2300:FF:000011">
    <property type="entry name" value="Cell cycle response regulator CtrA"/>
    <property type="match status" value="1"/>
</dbReference>
<dbReference type="Gene3D" id="3.40.50.2300">
    <property type="match status" value="1"/>
</dbReference>
<dbReference type="Gene3D" id="6.10.250.690">
    <property type="match status" value="1"/>
</dbReference>
<dbReference type="Gene3D" id="1.10.10.10">
    <property type="entry name" value="Winged helix-like DNA-binding domain superfamily/Winged helix DNA-binding domain"/>
    <property type="match status" value="1"/>
</dbReference>
<dbReference type="InterPro" id="IPR011006">
    <property type="entry name" value="CheY-like_superfamily"/>
</dbReference>
<dbReference type="InterPro" id="IPR001867">
    <property type="entry name" value="OmpR/PhoB-type_DNA-bd"/>
</dbReference>
<dbReference type="InterPro" id="IPR001789">
    <property type="entry name" value="Sig_transdc_resp-reg_receiver"/>
</dbReference>
<dbReference type="InterPro" id="IPR039420">
    <property type="entry name" value="WalR-like"/>
</dbReference>
<dbReference type="InterPro" id="IPR036388">
    <property type="entry name" value="WH-like_DNA-bd_sf"/>
</dbReference>
<dbReference type="NCBIfam" id="NF045991">
    <property type="entry name" value="RespRegCtrARhodob"/>
    <property type="match status" value="1"/>
</dbReference>
<dbReference type="PANTHER" id="PTHR48111">
    <property type="entry name" value="REGULATOR OF RPOS"/>
    <property type="match status" value="1"/>
</dbReference>
<dbReference type="PANTHER" id="PTHR48111:SF22">
    <property type="entry name" value="REGULATOR OF RPOS"/>
    <property type="match status" value="1"/>
</dbReference>
<dbReference type="Pfam" id="PF00072">
    <property type="entry name" value="Response_reg"/>
    <property type="match status" value="1"/>
</dbReference>
<dbReference type="Pfam" id="PF00486">
    <property type="entry name" value="Trans_reg_C"/>
    <property type="match status" value="1"/>
</dbReference>
<dbReference type="SMART" id="SM00448">
    <property type="entry name" value="REC"/>
    <property type="match status" value="1"/>
</dbReference>
<dbReference type="SMART" id="SM00862">
    <property type="entry name" value="Trans_reg_C"/>
    <property type="match status" value="1"/>
</dbReference>
<dbReference type="SUPFAM" id="SSF52172">
    <property type="entry name" value="CheY-like"/>
    <property type="match status" value="1"/>
</dbReference>
<dbReference type="PROSITE" id="PS51755">
    <property type="entry name" value="OMPR_PHOB"/>
    <property type="match status" value="1"/>
</dbReference>
<dbReference type="PROSITE" id="PS50110">
    <property type="entry name" value="RESPONSE_REGULATORY"/>
    <property type="match status" value="1"/>
</dbReference>